<gene>
    <name evidence="1" type="primary">kynA</name>
    <name type="ordered locus">sce8412</name>
</gene>
<dbReference type="EC" id="1.13.11.11" evidence="1"/>
<dbReference type="EMBL" id="AM746676">
    <property type="protein sequence ID" value="CAN98582.1"/>
    <property type="molecule type" value="Genomic_DNA"/>
</dbReference>
<dbReference type="SMR" id="A9FU01"/>
<dbReference type="STRING" id="448385.sce8412"/>
<dbReference type="KEGG" id="scl:sce8412"/>
<dbReference type="eggNOG" id="COG3483">
    <property type="taxonomic scope" value="Bacteria"/>
</dbReference>
<dbReference type="HOGENOM" id="CLU_045599_1_1_7"/>
<dbReference type="UniPathway" id="UPA00333">
    <property type="reaction ID" value="UER00453"/>
</dbReference>
<dbReference type="Proteomes" id="UP000002139">
    <property type="component" value="Chromosome"/>
</dbReference>
<dbReference type="GO" id="GO:0020037">
    <property type="term" value="F:heme binding"/>
    <property type="evidence" value="ECO:0000250"/>
    <property type="project" value="UniProtKB"/>
</dbReference>
<dbReference type="GO" id="GO:0046872">
    <property type="term" value="F:metal ion binding"/>
    <property type="evidence" value="ECO:0007669"/>
    <property type="project" value="UniProtKB-KW"/>
</dbReference>
<dbReference type="GO" id="GO:0004833">
    <property type="term" value="F:tryptophan 2,3-dioxygenase activity"/>
    <property type="evidence" value="ECO:0000250"/>
    <property type="project" value="UniProtKB"/>
</dbReference>
<dbReference type="GO" id="GO:0019442">
    <property type="term" value="P:L-tryptophan catabolic process to acetyl-CoA"/>
    <property type="evidence" value="ECO:0007669"/>
    <property type="project" value="TreeGrafter"/>
</dbReference>
<dbReference type="GO" id="GO:0019441">
    <property type="term" value="P:L-tryptophan catabolic process to kynurenine"/>
    <property type="evidence" value="ECO:0000250"/>
    <property type="project" value="UniProtKB"/>
</dbReference>
<dbReference type="Gene3D" id="1.10.287.3810">
    <property type="match status" value="1"/>
</dbReference>
<dbReference type="Gene3D" id="1.20.58.480">
    <property type="match status" value="1"/>
</dbReference>
<dbReference type="HAMAP" id="MF_01972">
    <property type="entry name" value="T23O"/>
    <property type="match status" value="1"/>
</dbReference>
<dbReference type="InterPro" id="IPR037217">
    <property type="entry name" value="Trp/Indoleamine_2_3_dOase-like"/>
</dbReference>
<dbReference type="InterPro" id="IPR004981">
    <property type="entry name" value="Trp_2_3_dOase"/>
</dbReference>
<dbReference type="PANTHER" id="PTHR10138">
    <property type="entry name" value="TRYPTOPHAN 2,3-DIOXYGENASE"/>
    <property type="match status" value="1"/>
</dbReference>
<dbReference type="PANTHER" id="PTHR10138:SF0">
    <property type="entry name" value="TRYPTOPHAN 2,3-DIOXYGENASE"/>
    <property type="match status" value="1"/>
</dbReference>
<dbReference type="Pfam" id="PF03301">
    <property type="entry name" value="Trp_dioxygenase"/>
    <property type="match status" value="1"/>
</dbReference>
<dbReference type="SUPFAM" id="SSF140959">
    <property type="entry name" value="Indolic compounds 2,3-dioxygenase-like"/>
    <property type="match status" value="1"/>
</dbReference>
<protein>
    <recommendedName>
        <fullName evidence="1">Tryptophan 2,3-dioxygenase</fullName>
        <shortName evidence="1">TDO</shortName>
        <ecNumber evidence="1">1.13.11.11</ecNumber>
    </recommendedName>
    <alternativeName>
        <fullName evidence="1">Tryptamin 2,3-dioxygenase</fullName>
    </alternativeName>
    <alternativeName>
        <fullName evidence="1">Tryptophan oxygenase</fullName>
        <shortName evidence="1">TO</shortName>
        <shortName evidence="1">TRPO</shortName>
    </alternativeName>
    <alternativeName>
        <fullName evidence="1">Tryptophan pyrrolase</fullName>
    </alternativeName>
    <alternativeName>
        <fullName evidence="1">Tryptophanase</fullName>
    </alternativeName>
</protein>
<sequence length="412" mass="47022">MRPVPGPSVFWGAGSRLPAPLVARAHRLLRTRRANPARGASRITKDMNYWDYIHVEELLALQGGFDDDEQKVGNDEALFIVVHQIYELWFKLILRELTSARELFRQNPVPDQKLASAARSFRRVVTIFEQAIEHFRVMETLTTRDYLDFRDRLIPASGFQSAQLREIELLLGLDDALRIPLGREGSYKEALKTADGAPSAATRRVEARLASGPSLKHFLDEWLSRTPIDGSSEPEGVVGFLRSYTRSMRQENERRVQMAIDKALTPPDVERLRARYEAESAAAEAFLLAEDDPAADAATREKRRAVRAAIVFIESYRELPRLAWPREVLDRILEMEQAMLIWRQRHARMVERVIGRRTGTGGSAGVDYLDQTALRYRVFGDLWTVRSLLLRKPSVPEIEHASDYGFRVEDSP</sequence>
<comment type="function">
    <text evidence="1">Heme-dependent dioxygenase that catalyzes the oxidative cleavage of the L-tryptophan (L-Trp) pyrrole ring and converts L-tryptophan to N-formyl-L-kynurenine. Catalyzes the oxidative cleavage of the indole moiety.</text>
</comment>
<comment type="catalytic activity">
    <reaction evidence="1">
        <text>L-tryptophan + O2 = N-formyl-L-kynurenine</text>
        <dbReference type="Rhea" id="RHEA:24536"/>
        <dbReference type="ChEBI" id="CHEBI:15379"/>
        <dbReference type="ChEBI" id="CHEBI:57912"/>
        <dbReference type="ChEBI" id="CHEBI:58629"/>
        <dbReference type="EC" id="1.13.11.11"/>
    </reaction>
</comment>
<comment type="cofactor">
    <cofactor evidence="1">
        <name>heme</name>
        <dbReference type="ChEBI" id="CHEBI:30413"/>
    </cofactor>
    <text evidence="1">Binds 1 heme group per subunit.</text>
</comment>
<comment type="pathway">
    <text evidence="1">Amino-acid degradation; L-tryptophan degradation via kynurenine pathway; L-kynurenine from L-tryptophan: step 1/2.</text>
</comment>
<comment type="subunit">
    <text evidence="1">Homotetramer.</text>
</comment>
<comment type="similarity">
    <text evidence="1">Belongs to the tryptophan 2,3-dioxygenase family.</text>
</comment>
<organism>
    <name type="scientific">Sorangium cellulosum (strain So ce56)</name>
    <name type="common">Polyangium cellulosum (strain So ce56)</name>
    <dbReference type="NCBI Taxonomy" id="448385"/>
    <lineage>
        <taxon>Bacteria</taxon>
        <taxon>Pseudomonadati</taxon>
        <taxon>Myxococcota</taxon>
        <taxon>Polyangia</taxon>
        <taxon>Polyangiales</taxon>
        <taxon>Polyangiaceae</taxon>
        <taxon>Sorangium</taxon>
    </lineage>
</organism>
<feature type="chain" id="PRO_0000360137" description="Tryptophan 2,3-dioxygenase">
    <location>
        <begin position="1"/>
        <end position="412"/>
    </location>
</feature>
<feature type="binding site" evidence="1">
    <location>
        <begin position="79"/>
        <end position="83"/>
    </location>
    <ligand>
        <name>substrate</name>
    </ligand>
</feature>
<feature type="binding site" evidence="1">
    <location>
        <position position="146"/>
    </location>
    <ligand>
        <name>substrate</name>
    </ligand>
</feature>
<feature type="binding site" evidence="1">
    <location>
        <position position="150"/>
    </location>
    <ligand>
        <name>substrate</name>
    </ligand>
</feature>
<feature type="binding site" description="axial binding residue" evidence="1">
    <location>
        <position position="346"/>
    </location>
    <ligand>
        <name>heme</name>
        <dbReference type="ChEBI" id="CHEBI:30413"/>
    </ligand>
    <ligandPart>
        <name>Fe</name>
        <dbReference type="ChEBI" id="CHEBI:18248"/>
    </ligandPart>
</feature>
<feature type="binding site" evidence="1">
    <location>
        <position position="360"/>
    </location>
    <ligand>
        <name>substrate</name>
    </ligand>
</feature>
<name>T23O_SORC5</name>
<accession>A9FU01</accession>
<reference key="1">
    <citation type="journal article" date="2007" name="Nat. Biotechnol.">
        <title>Complete genome sequence of the myxobacterium Sorangium cellulosum.</title>
        <authorList>
            <person name="Schneiker S."/>
            <person name="Perlova O."/>
            <person name="Kaiser O."/>
            <person name="Gerth K."/>
            <person name="Alici A."/>
            <person name="Altmeyer M.O."/>
            <person name="Bartels D."/>
            <person name="Bekel T."/>
            <person name="Beyer S."/>
            <person name="Bode E."/>
            <person name="Bode H.B."/>
            <person name="Bolten C.J."/>
            <person name="Choudhuri J.V."/>
            <person name="Doss S."/>
            <person name="Elnakady Y.A."/>
            <person name="Frank B."/>
            <person name="Gaigalat L."/>
            <person name="Goesmann A."/>
            <person name="Groeger C."/>
            <person name="Gross F."/>
            <person name="Jelsbak L."/>
            <person name="Jelsbak L."/>
            <person name="Kalinowski J."/>
            <person name="Kegler C."/>
            <person name="Knauber T."/>
            <person name="Konietzny S."/>
            <person name="Kopp M."/>
            <person name="Krause L."/>
            <person name="Krug D."/>
            <person name="Linke B."/>
            <person name="Mahmud T."/>
            <person name="Martinez-Arias R."/>
            <person name="McHardy A.C."/>
            <person name="Merai M."/>
            <person name="Meyer F."/>
            <person name="Mormann S."/>
            <person name="Munoz-Dorado J."/>
            <person name="Perez J."/>
            <person name="Pradella S."/>
            <person name="Rachid S."/>
            <person name="Raddatz G."/>
            <person name="Rosenau F."/>
            <person name="Rueckert C."/>
            <person name="Sasse F."/>
            <person name="Scharfe M."/>
            <person name="Schuster S.C."/>
            <person name="Suen G."/>
            <person name="Treuner-Lange A."/>
            <person name="Velicer G.J."/>
            <person name="Vorholter F.-J."/>
            <person name="Weissman K.J."/>
            <person name="Welch R.D."/>
            <person name="Wenzel S.C."/>
            <person name="Whitworth D.E."/>
            <person name="Wilhelm S."/>
            <person name="Wittmann C."/>
            <person name="Bloecker H."/>
            <person name="Puehler A."/>
            <person name="Mueller R."/>
        </authorList>
    </citation>
    <scope>NUCLEOTIDE SEQUENCE [LARGE SCALE GENOMIC DNA]</scope>
    <source>
        <strain>So ce56</strain>
    </source>
</reference>
<keyword id="KW-0223">Dioxygenase</keyword>
<keyword id="KW-0349">Heme</keyword>
<keyword id="KW-0408">Iron</keyword>
<keyword id="KW-0479">Metal-binding</keyword>
<keyword id="KW-0560">Oxidoreductase</keyword>
<keyword id="KW-1185">Reference proteome</keyword>
<keyword id="KW-0823">Tryptophan catabolism</keyword>
<proteinExistence type="inferred from homology"/>
<evidence type="ECO:0000255" key="1">
    <source>
        <dbReference type="HAMAP-Rule" id="MF_01972"/>
    </source>
</evidence>